<accession>O28243</accession>
<sequence>MEKLKALIEVTKPKQTFLLMITFLVSYIVARGGADFNFVIAAISMFLAISGTTAINMWLDRDIDAIMPRTRKRPVPAGILKPSECAAFGAAIFAIGQVLAFLVSLEFGLVVFFGLFFDIVVYTILLKRKSPYSIVLGGFAGAMPALGGWVAVQGFTLPGFIIAAIVLLWIPSHIWYISMHYEEDYRMANIPMYPLVVGMERASWAIVFATAAMLVLAASLYVLLPLGIFYLVISTSAVAFFLYKAVKFALSPDRVKARKMYKLASMTLGLVYFSLLLGVFL</sequence>
<protein>
    <recommendedName>
        <fullName evidence="1">Protoheme IX farnesyltransferase</fullName>
        <ecNumber evidence="1">2.5.1.141</ecNumber>
    </recommendedName>
    <alternativeName>
        <fullName evidence="1">Heme B farnesyltransferase</fullName>
    </alternativeName>
    <alternativeName>
        <fullName evidence="1">Heme O synthase</fullName>
    </alternativeName>
</protein>
<reference key="1">
    <citation type="journal article" date="1997" name="Nature">
        <title>The complete genome sequence of the hyperthermophilic, sulphate-reducing archaeon Archaeoglobus fulgidus.</title>
        <authorList>
            <person name="Klenk H.-P."/>
            <person name="Clayton R.A."/>
            <person name="Tomb J.-F."/>
            <person name="White O."/>
            <person name="Nelson K.E."/>
            <person name="Ketchum K.A."/>
            <person name="Dodson R.J."/>
            <person name="Gwinn M.L."/>
            <person name="Hickey E.K."/>
            <person name="Peterson J.D."/>
            <person name="Richardson D.L."/>
            <person name="Kerlavage A.R."/>
            <person name="Graham D.E."/>
            <person name="Kyrpides N.C."/>
            <person name="Fleischmann R.D."/>
            <person name="Quackenbush J."/>
            <person name="Lee N.H."/>
            <person name="Sutton G.G."/>
            <person name="Gill S.R."/>
            <person name="Kirkness E.F."/>
            <person name="Dougherty B.A."/>
            <person name="McKenney K."/>
            <person name="Adams M.D."/>
            <person name="Loftus B.J."/>
            <person name="Peterson S.N."/>
            <person name="Reich C.I."/>
            <person name="McNeil L.K."/>
            <person name="Badger J.H."/>
            <person name="Glodek A."/>
            <person name="Zhou L."/>
            <person name="Overbeek R."/>
            <person name="Gocayne J.D."/>
            <person name="Weidman J.F."/>
            <person name="McDonald L.A."/>
            <person name="Utterback T.R."/>
            <person name="Cotton M.D."/>
            <person name="Spriggs T."/>
            <person name="Artiach P."/>
            <person name="Kaine B.P."/>
            <person name="Sykes S.M."/>
            <person name="Sadow P.W."/>
            <person name="D'Andrea K.P."/>
            <person name="Bowman C."/>
            <person name="Fujii C."/>
            <person name="Garland S.A."/>
            <person name="Mason T.M."/>
            <person name="Olsen G.J."/>
            <person name="Fraser C.M."/>
            <person name="Smith H.O."/>
            <person name="Woese C.R."/>
            <person name="Venter J.C."/>
        </authorList>
    </citation>
    <scope>NUCLEOTIDE SEQUENCE [LARGE SCALE GENOMIC DNA]</scope>
    <source>
        <strain>ATCC 49558 / DSM 4304 / JCM 9628 / NBRC 100126 / VC-16</strain>
    </source>
</reference>
<evidence type="ECO:0000255" key="1">
    <source>
        <dbReference type="HAMAP-Rule" id="MF_00154"/>
    </source>
</evidence>
<gene>
    <name evidence="1" type="primary">ctaB</name>
    <name type="ordered locus">AF_2036</name>
</gene>
<keyword id="KW-1003">Cell membrane</keyword>
<keyword id="KW-0350">Heme biosynthesis</keyword>
<keyword id="KW-0472">Membrane</keyword>
<keyword id="KW-1185">Reference proteome</keyword>
<keyword id="KW-0808">Transferase</keyword>
<keyword id="KW-0812">Transmembrane</keyword>
<keyword id="KW-1133">Transmembrane helix</keyword>
<proteinExistence type="inferred from homology"/>
<comment type="function">
    <text evidence="1">Converts heme B (protoheme IX) to heme O by substitution of the vinyl group on carbon 2 of heme B porphyrin ring with a hydroxyethyl farnesyl side group.</text>
</comment>
<comment type="catalytic activity">
    <reaction evidence="1">
        <text>heme b + (2E,6E)-farnesyl diphosphate + H2O = Fe(II)-heme o + diphosphate</text>
        <dbReference type="Rhea" id="RHEA:28070"/>
        <dbReference type="ChEBI" id="CHEBI:15377"/>
        <dbReference type="ChEBI" id="CHEBI:33019"/>
        <dbReference type="ChEBI" id="CHEBI:60344"/>
        <dbReference type="ChEBI" id="CHEBI:60530"/>
        <dbReference type="ChEBI" id="CHEBI:175763"/>
        <dbReference type="EC" id="2.5.1.141"/>
    </reaction>
</comment>
<comment type="pathway">
    <text evidence="1">Porphyrin-containing compound metabolism; heme O biosynthesis; heme O from protoheme: step 1/1.</text>
</comment>
<comment type="subcellular location">
    <subcellularLocation>
        <location evidence="1">Cell membrane</location>
        <topology evidence="1">Multi-pass membrane protein</topology>
    </subcellularLocation>
</comment>
<comment type="miscellaneous">
    <text evidence="1">Carbon 2 of the heme B porphyrin ring is defined according to the Fischer nomenclature.</text>
</comment>
<comment type="similarity">
    <text evidence="1">Belongs to the UbiA prenyltransferase family. Protoheme IX farnesyltransferase subfamily.</text>
</comment>
<feature type="chain" id="PRO_0000346084" description="Protoheme IX farnesyltransferase">
    <location>
        <begin position="1"/>
        <end position="281"/>
    </location>
</feature>
<feature type="transmembrane region" description="Helical" evidence="1">
    <location>
        <begin position="16"/>
        <end position="36"/>
    </location>
</feature>
<feature type="transmembrane region" description="Helical" evidence="1">
    <location>
        <begin position="38"/>
        <end position="58"/>
    </location>
</feature>
<feature type="transmembrane region" description="Helical" evidence="1">
    <location>
        <begin position="75"/>
        <end position="95"/>
    </location>
</feature>
<feature type="transmembrane region" description="Helical" evidence="1">
    <location>
        <begin position="101"/>
        <end position="121"/>
    </location>
</feature>
<feature type="transmembrane region" description="Helical" evidence="1">
    <location>
        <begin position="129"/>
        <end position="149"/>
    </location>
</feature>
<feature type="transmembrane region" description="Helical" evidence="1">
    <location>
        <begin position="150"/>
        <end position="170"/>
    </location>
</feature>
<feature type="transmembrane region" description="Helical" evidence="1">
    <location>
        <begin position="202"/>
        <end position="224"/>
    </location>
</feature>
<feature type="transmembrane region" description="Helical" evidence="1">
    <location>
        <begin position="228"/>
        <end position="250"/>
    </location>
</feature>
<feature type="transmembrane region" description="Helical" evidence="1">
    <location>
        <begin position="261"/>
        <end position="281"/>
    </location>
</feature>
<dbReference type="EC" id="2.5.1.141" evidence="1"/>
<dbReference type="EMBL" id="AE000782">
    <property type="protein sequence ID" value="AAB89218.1"/>
    <property type="molecule type" value="Genomic_DNA"/>
</dbReference>
<dbReference type="PIR" id="C69504">
    <property type="entry name" value="C69504"/>
</dbReference>
<dbReference type="RefSeq" id="WP_010879528.1">
    <property type="nucleotide sequence ID" value="NC_000917.1"/>
</dbReference>
<dbReference type="SMR" id="O28243"/>
<dbReference type="STRING" id="224325.AF_2036"/>
<dbReference type="PaxDb" id="224325-AF_2036"/>
<dbReference type="EnsemblBacteria" id="AAB89218">
    <property type="protein sequence ID" value="AAB89218"/>
    <property type="gene ID" value="AF_2036"/>
</dbReference>
<dbReference type="GeneID" id="1485262"/>
<dbReference type="KEGG" id="afu:AF_2036"/>
<dbReference type="eggNOG" id="arCOG00479">
    <property type="taxonomic scope" value="Archaea"/>
</dbReference>
<dbReference type="HOGENOM" id="CLU_029631_0_1_2"/>
<dbReference type="OrthoDB" id="131615at2157"/>
<dbReference type="PhylomeDB" id="O28243"/>
<dbReference type="UniPathway" id="UPA00834">
    <property type="reaction ID" value="UER00712"/>
</dbReference>
<dbReference type="Proteomes" id="UP000002199">
    <property type="component" value="Chromosome"/>
</dbReference>
<dbReference type="GO" id="GO:0005886">
    <property type="term" value="C:plasma membrane"/>
    <property type="evidence" value="ECO:0007669"/>
    <property type="project" value="UniProtKB-SubCell"/>
</dbReference>
<dbReference type="GO" id="GO:0008495">
    <property type="term" value="F:protoheme IX farnesyltransferase activity"/>
    <property type="evidence" value="ECO:0007669"/>
    <property type="project" value="UniProtKB-UniRule"/>
</dbReference>
<dbReference type="GO" id="GO:0048034">
    <property type="term" value="P:heme O biosynthetic process"/>
    <property type="evidence" value="ECO:0007669"/>
    <property type="project" value="UniProtKB-UniRule"/>
</dbReference>
<dbReference type="CDD" id="cd13957">
    <property type="entry name" value="PT_UbiA_Cox10"/>
    <property type="match status" value="1"/>
</dbReference>
<dbReference type="Gene3D" id="1.10.357.140">
    <property type="entry name" value="UbiA prenyltransferase"/>
    <property type="match status" value="1"/>
</dbReference>
<dbReference type="HAMAP" id="MF_00154">
    <property type="entry name" value="CyoE_CtaB"/>
    <property type="match status" value="1"/>
</dbReference>
<dbReference type="InterPro" id="IPR006369">
    <property type="entry name" value="Protohaem_IX_farnesylTrfase"/>
</dbReference>
<dbReference type="InterPro" id="IPR000537">
    <property type="entry name" value="UbiA_prenyltransferase"/>
</dbReference>
<dbReference type="InterPro" id="IPR030470">
    <property type="entry name" value="UbiA_prenylTrfase_CS"/>
</dbReference>
<dbReference type="InterPro" id="IPR044878">
    <property type="entry name" value="UbiA_sf"/>
</dbReference>
<dbReference type="NCBIfam" id="TIGR01473">
    <property type="entry name" value="cyoE_ctaB"/>
    <property type="match status" value="1"/>
</dbReference>
<dbReference type="PANTHER" id="PTHR43448">
    <property type="entry name" value="PROTOHEME IX FARNESYLTRANSFERASE, MITOCHONDRIAL"/>
    <property type="match status" value="1"/>
</dbReference>
<dbReference type="PANTHER" id="PTHR43448:SF2">
    <property type="entry name" value="PROTOHEME IX FARNESYLTRANSFERASE, MITOCHONDRIAL"/>
    <property type="match status" value="1"/>
</dbReference>
<dbReference type="Pfam" id="PF01040">
    <property type="entry name" value="UbiA"/>
    <property type="match status" value="1"/>
</dbReference>
<dbReference type="PROSITE" id="PS00943">
    <property type="entry name" value="UBIA"/>
    <property type="match status" value="1"/>
</dbReference>
<organism>
    <name type="scientific">Archaeoglobus fulgidus (strain ATCC 49558 / DSM 4304 / JCM 9628 / NBRC 100126 / VC-16)</name>
    <dbReference type="NCBI Taxonomy" id="224325"/>
    <lineage>
        <taxon>Archaea</taxon>
        <taxon>Methanobacteriati</taxon>
        <taxon>Methanobacteriota</taxon>
        <taxon>Archaeoglobi</taxon>
        <taxon>Archaeoglobales</taxon>
        <taxon>Archaeoglobaceae</taxon>
        <taxon>Archaeoglobus</taxon>
    </lineage>
</organism>
<name>COXX_ARCFU</name>